<protein>
    <recommendedName>
        <fullName evidence="1">Exodeoxyribonuclease 7 large subunit</fullName>
        <ecNumber evidence="1">3.1.11.6</ecNumber>
    </recommendedName>
    <alternativeName>
        <fullName evidence="1">Exodeoxyribonuclease VII large subunit</fullName>
        <shortName evidence="1">Exonuclease VII large subunit</shortName>
    </alternativeName>
</protein>
<dbReference type="EC" id="3.1.11.6" evidence="1"/>
<dbReference type="EMBL" id="AE009948">
    <property type="protein sequence ID" value="AAM99398.1"/>
    <property type="molecule type" value="Genomic_DNA"/>
</dbReference>
<dbReference type="RefSeq" id="NP_687526.1">
    <property type="nucleotide sequence ID" value="NC_004116.1"/>
</dbReference>
<dbReference type="RefSeq" id="WP_001286939.1">
    <property type="nucleotide sequence ID" value="NC_004116.1"/>
</dbReference>
<dbReference type="SMR" id="Q8E166"/>
<dbReference type="STRING" id="208435.SAG0496"/>
<dbReference type="KEGG" id="sag:SAG0496"/>
<dbReference type="PATRIC" id="fig|208435.3.peg.493"/>
<dbReference type="HOGENOM" id="CLU_023625_3_1_9"/>
<dbReference type="OrthoDB" id="9802795at2"/>
<dbReference type="Proteomes" id="UP000000821">
    <property type="component" value="Chromosome"/>
</dbReference>
<dbReference type="GO" id="GO:0005737">
    <property type="term" value="C:cytoplasm"/>
    <property type="evidence" value="ECO:0007669"/>
    <property type="project" value="UniProtKB-SubCell"/>
</dbReference>
<dbReference type="GO" id="GO:0009318">
    <property type="term" value="C:exodeoxyribonuclease VII complex"/>
    <property type="evidence" value="ECO:0007669"/>
    <property type="project" value="InterPro"/>
</dbReference>
<dbReference type="GO" id="GO:0008855">
    <property type="term" value="F:exodeoxyribonuclease VII activity"/>
    <property type="evidence" value="ECO:0007669"/>
    <property type="project" value="UniProtKB-UniRule"/>
</dbReference>
<dbReference type="GO" id="GO:0003676">
    <property type="term" value="F:nucleic acid binding"/>
    <property type="evidence" value="ECO:0007669"/>
    <property type="project" value="InterPro"/>
</dbReference>
<dbReference type="GO" id="GO:0006308">
    <property type="term" value="P:DNA catabolic process"/>
    <property type="evidence" value="ECO:0007669"/>
    <property type="project" value="UniProtKB-UniRule"/>
</dbReference>
<dbReference type="CDD" id="cd04489">
    <property type="entry name" value="ExoVII_LU_OBF"/>
    <property type="match status" value="1"/>
</dbReference>
<dbReference type="HAMAP" id="MF_00378">
    <property type="entry name" value="Exonuc_7_L"/>
    <property type="match status" value="1"/>
</dbReference>
<dbReference type="InterPro" id="IPR003753">
    <property type="entry name" value="Exonuc_VII_L"/>
</dbReference>
<dbReference type="InterPro" id="IPR020579">
    <property type="entry name" value="Exonuc_VII_lsu_C"/>
</dbReference>
<dbReference type="InterPro" id="IPR025824">
    <property type="entry name" value="OB-fold_nuc-bd_dom"/>
</dbReference>
<dbReference type="NCBIfam" id="TIGR00237">
    <property type="entry name" value="xseA"/>
    <property type="match status" value="1"/>
</dbReference>
<dbReference type="PANTHER" id="PTHR30008">
    <property type="entry name" value="EXODEOXYRIBONUCLEASE 7 LARGE SUBUNIT"/>
    <property type="match status" value="1"/>
</dbReference>
<dbReference type="PANTHER" id="PTHR30008:SF0">
    <property type="entry name" value="EXODEOXYRIBONUCLEASE 7 LARGE SUBUNIT"/>
    <property type="match status" value="1"/>
</dbReference>
<dbReference type="Pfam" id="PF02601">
    <property type="entry name" value="Exonuc_VII_L"/>
    <property type="match status" value="1"/>
</dbReference>
<dbReference type="Pfam" id="PF13742">
    <property type="entry name" value="tRNA_anti_2"/>
    <property type="match status" value="1"/>
</dbReference>
<gene>
    <name evidence="1" type="primary">xseA</name>
    <name type="ordered locus">SAG0496</name>
</gene>
<reference key="1">
    <citation type="journal article" date="2002" name="Proc. Natl. Acad. Sci. U.S.A.">
        <title>Complete genome sequence and comparative genomic analysis of an emerging human pathogen, serotype V Streptococcus agalactiae.</title>
        <authorList>
            <person name="Tettelin H."/>
            <person name="Masignani V."/>
            <person name="Cieslewicz M.J."/>
            <person name="Eisen J.A."/>
            <person name="Peterson S.N."/>
            <person name="Wessels M.R."/>
            <person name="Paulsen I.T."/>
            <person name="Nelson K.E."/>
            <person name="Margarit I."/>
            <person name="Read T.D."/>
            <person name="Madoff L.C."/>
            <person name="Wolf A.M."/>
            <person name="Beanan M.J."/>
            <person name="Brinkac L.M."/>
            <person name="Daugherty S.C."/>
            <person name="DeBoy R.T."/>
            <person name="Durkin A.S."/>
            <person name="Kolonay J.F."/>
            <person name="Madupu R."/>
            <person name="Lewis M.R."/>
            <person name="Radune D."/>
            <person name="Fedorova N.B."/>
            <person name="Scanlan D."/>
            <person name="Khouri H.M."/>
            <person name="Mulligan S."/>
            <person name="Carty H.A."/>
            <person name="Cline R.T."/>
            <person name="Van Aken S.E."/>
            <person name="Gill J."/>
            <person name="Scarselli M."/>
            <person name="Mora M."/>
            <person name="Iacobini E.T."/>
            <person name="Brettoni C."/>
            <person name="Galli G."/>
            <person name="Mariani M."/>
            <person name="Vegni F."/>
            <person name="Maione D."/>
            <person name="Rinaudo D."/>
            <person name="Rappuoli R."/>
            <person name="Telford J.L."/>
            <person name="Kasper D.L."/>
            <person name="Grandi G."/>
            <person name="Fraser C.M."/>
        </authorList>
    </citation>
    <scope>NUCLEOTIDE SEQUENCE [LARGE SCALE GENOMIC DNA]</scope>
    <source>
        <strain>ATCC BAA-611 / 2603 V/R</strain>
    </source>
</reference>
<proteinExistence type="inferred from homology"/>
<evidence type="ECO:0000255" key="1">
    <source>
        <dbReference type="HAMAP-Rule" id="MF_00378"/>
    </source>
</evidence>
<feature type="chain" id="PRO_0000197888" description="Exodeoxyribonuclease 7 large subunit">
    <location>
        <begin position="1"/>
        <end position="446"/>
    </location>
</feature>
<organism>
    <name type="scientific">Streptococcus agalactiae serotype V (strain ATCC BAA-611 / 2603 V/R)</name>
    <dbReference type="NCBI Taxonomy" id="208435"/>
    <lineage>
        <taxon>Bacteria</taxon>
        <taxon>Bacillati</taxon>
        <taxon>Bacillota</taxon>
        <taxon>Bacilli</taxon>
        <taxon>Lactobacillales</taxon>
        <taxon>Streptococcaceae</taxon>
        <taxon>Streptococcus</taxon>
    </lineage>
</organism>
<accession>Q8E166</accession>
<name>EX7L_STRA5</name>
<sequence>MSDYLSVSTLTKYLKLKFDKDPYLERVYLTGQVSNFRRRPNHQYFSLKDDKSVIQATMWSGHFKKLGFELEEGMKVNVVGRVQLYEPSGSYSIIVEKAEPDGIGALAIQFEQLKKKLSQAGYFDDRHKQLIPQFVRKIGVVTSPSGAVIRDIITTVSRRFPGVEILLFPTKVQGEGAAQEIAQTIALANEKKDLDLLIVGRGGGSIEDLWAFNEECVVEAIFESRLPVISSVGHETDTTLADFVADRRAATPTAAAELATPVTKIDILSWITERENRMYQSSLRLIRTKEERLQKSKQSVIFRQPERLYDGFLQKLDNLNQQLTYSMRDKLQTVRQKQGLLHQKLQGIDLKQRIHIYQERVVQSRRLLSSTMTSQYDSKLARFEKAQDALISLDSSRIVARGYAIIEKNHTLVSTTNGINEGDHLQVKMQDGLLEVEVKDVRQENI</sequence>
<comment type="function">
    <text evidence="1">Bidirectionally degrades single-stranded DNA into large acid-insoluble oligonucleotides, which are then degraded further into small acid-soluble oligonucleotides.</text>
</comment>
<comment type="catalytic activity">
    <reaction evidence="1">
        <text>Exonucleolytic cleavage in either 5'- to 3'- or 3'- to 5'-direction to yield nucleoside 5'-phosphates.</text>
        <dbReference type="EC" id="3.1.11.6"/>
    </reaction>
</comment>
<comment type="subunit">
    <text evidence="1">Heterooligomer composed of large and small subunits.</text>
</comment>
<comment type="subcellular location">
    <subcellularLocation>
        <location evidence="1">Cytoplasm</location>
    </subcellularLocation>
</comment>
<comment type="similarity">
    <text evidence="1">Belongs to the XseA family.</text>
</comment>
<keyword id="KW-0963">Cytoplasm</keyword>
<keyword id="KW-0269">Exonuclease</keyword>
<keyword id="KW-0378">Hydrolase</keyword>
<keyword id="KW-0540">Nuclease</keyword>
<keyword id="KW-1185">Reference proteome</keyword>